<gene>
    <name type="primary">kgd</name>
    <name type="ordered locus">BQ2027_MB1280C</name>
</gene>
<reference key="1">
    <citation type="journal article" date="2003" name="Proc. Natl. Acad. Sci. U.S.A.">
        <title>The complete genome sequence of Mycobacterium bovis.</title>
        <authorList>
            <person name="Garnier T."/>
            <person name="Eiglmeier K."/>
            <person name="Camus J.-C."/>
            <person name="Medina N."/>
            <person name="Mansoor H."/>
            <person name="Pryor M."/>
            <person name="Duthoy S."/>
            <person name="Grondin S."/>
            <person name="Lacroix C."/>
            <person name="Monsempe C."/>
            <person name="Simon S."/>
            <person name="Harris B."/>
            <person name="Atkin R."/>
            <person name="Doggett J."/>
            <person name="Mayes R."/>
            <person name="Keating L."/>
            <person name="Wheeler P.R."/>
            <person name="Parkhill J."/>
            <person name="Barrell B.G."/>
            <person name="Cole S.T."/>
            <person name="Gordon S.V."/>
            <person name="Hewinson R.G."/>
        </authorList>
    </citation>
    <scope>NUCLEOTIDE SEQUENCE [LARGE SCALE GENOMIC DNA]</scope>
    <source>
        <strain>ATCC BAA-935 / AF2122/97</strain>
    </source>
</reference>
<reference key="2">
    <citation type="journal article" date="2017" name="Genome Announc.">
        <title>Updated reference genome sequence and annotation of Mycobacterium bovis AF2122/97.</title>
        <authorList>
            <person name="Malone K.M."/>
            <person name="Farrell D."/>
            <person name="Stuber T.P."/>
            <person name="Schubert O.T."/>
            <person name="Aebersold R."/>
            <person name="Robbe-Austerman S."/>
            <person name="Gordon S.V."/>
        </authorList>
    </citation>
    <scope>NUCLEOTIDE SEQUENCE [LARGE SCALE GENOMIC DNA]</scope>
    <scope>GENOME REANNOTATION</scope>
    <source>
        <strain>ATCC BAA-935 / AF2122/97</strain>
    </source>
</reference>
<dbReference type="EC" id="2.2.1.5"/>
<dbReference type="EC" id="4.1.1.71"/>
<dbReference type="EC" id="1.2.4.2"/>
<dbReference type="EC" id="2.3.1.61"/>
<dbReference type="EMBL" id="LT708304">
    <property type="protein sequence ID" value="SIT99881.1"/>
    <property type="molecule type" value="Genomic_DNA"/>
</dbReference>
<dbReference type="RefSeq" id="NP_854934.2">
    <property type="nucleotide sequence ID" value="NC_002945.3"/>
</dbReference>
<dbReference type="RefSeq" id="WP_010950509.1">
    <property type="nucleotide sequence ID" value="NC_002945.4"/>
</dbReference>
<dbReference type="SMR" id="Q7U0A6"/>
<dbReference type="KEGG" id="mbo:BQ2027_MB1280C"/>
<dbReference type="PATRIC" id="fig|233413.5.peg.1403"/>
<dbReference type="UniPathway" id="UPA00223">
    <property type="reaction ID" value="UER00997"/>
</dbReference>
<dbReference type="UniPathway" id="UPA00223">
    <property type="reaction ID" value="UER01001"/>
</dbReference>
<dbReference type="Proteomes" id="UP000001419">
    <property type="component" value="Chromosome"/>
</dbReference>
<dbReference type="GO" id="GO:0005829">
    <property type="term" value="C:cytosol"/>
    <property type="evidence" value="ECO:0007669"/>
    <property type="project" value="TreeGrafter"/>
</dbReference>
<dbReference type="GO" id="GO:0045252">
    <property type="term" value="C:oxoglutarate dehydrogenase complex"/>
    <property type="evidence" value="ECO:0007669"/>
    <property type="project" value="TreeGrafter"/>
</dbReference>
<dbReference type="GO" id="GO:0050439">
    <property type="term" value="F:2-hydroxy-3-oxoadipate synthase activity"/>
    <property type="evidence" value="ECO:0007669"/>
    <property type="project" value="UniProtKB-EC"/>
</dbReference>
<dbReference type="GO" id="GO:0008683">
    <property type="term" value="F:2-oxoglutarate decarboxylase activity"/>
    <property type="evidence" value="ECO:0007669"/>
    <property type="project" value="UniProtKB-EC"/>
</dbReference>
<dbReference type="GO" id="GO:0004149">
    <property type="term" value="F:dihydrolipoyllysine-residue succinyltransferase activity"/>
    <property type="evidence" value="ECO:0007669"/>
    <property type="project" value="UniProtKB-EC"/>
</dbReference>
<dbReference type="GO" id="GO:0000287">
    <property type="term" value="F:magnesium ion binding"/>
    <property type="evidence" value="ECO:0007669"/>
    <property type="project" value="UniProtKB-ARBA"/>
</dbReference>
<dbReference type="GO" id="GO:0004591">
    <property type="term" value="F:oxoglutarate dehydrogenase (succinyl-transferring) activity"/>
    <property type="evidence" value="ECO:0007669"/>
    <property type="project" value="UniProtKB-EC"/>
</dbReference>
<dbReference type="GO" id="GO:0030976">
    <property type="term" value="F:thiamine pyrophosphate binding"/>
    <property type="evidence" value="ECO:0007669"/>
    <property type="project" value="InterPro"/>
</dbReference>
<dbReference type="GO" id="GO:0006099">
    <property type="term" value="P:tricarboxylic acid cycle"/>
    <property type="evidence" value="ECO:0007669"/>
    <property type="project" value="UniProtKB-UniPathway"/>
</dbReference>
<dbReference type="CDD" id="cd02016">
    <property type="entry name" value="TPP_E1_OGDC_like"/>
    <property type="match status" value="1"/>
</dbReference>
<dbReference type="FunFam" id="3.30.559.10:FF:000011">
    <property type="entry name" value="2-oxoglutarate dehydrogenase E1 component"/>
    <property type="match status" value="1"/>
</dbReference>
<dbReference type="FunFam" id="3.40.50.11610:FF:000002">
    <property type="entry name" value="2-oxoglutarate dehydrogenase E1 component"/>
    <property type="match status" value="1"/>
</dbReference>
<dbReference type="FunFam" id="3.40.50.970:FF:000018">
    <property type="entry name" value="2-oxoglutarate dehydrogenase E1 component"/>
    <property type="match status" value="1"/>
</dbReference>
<dbReference type="Gene3D" id="3.40.50.12470">
    <property type="match status" value="1"/>
</dbReference>
<dbReference type="Gene3D" id="3.40.50.970">
    <property type="match status" value="1"/>
</dbReference>
<dbReference type="Gene3D" id="3.30.559.10">
    <property type="entry name" value="Chloramphenicol acetyltransferase-like domain"/>
    <property type="match status" value="1"/>
</dbReference>
<dbReference type="Gene3D" id="3.40.50.11610">
    <property type="entry name" value="Multifunctional 2-oxoglutarate metabolism enzyme, C-terminal domain"/>
    <property type="match status" value="1"/>
</dbReference>
<dbReference type="Gene3D" id="1.10.287.1150">
    <property type="entry name" value="TPP helical domain"/>
    <property type="match status" value="1"/>
</dbReference>
<dbReference type="InterPro" id="IPR001078">
    <property type="entry name" value="2-oxoacid_DH_actylTfrase"/>
</dbReference>
<dbReference type="InterPro" id="IPR032106">
    <property type="entry name" value="2-oxogl_dehyd_N"/>
</dbReference>
<dbReference type="InterPro" id="IPR011603">
    <property type="entry name" value="2oxoglutarate_DH_E1"/>
</dbReference>
<dbReference type="InterPro" id="IPR023213">
    <property type="entry name" value="CAT-like_dom_sf"/>
</dbReference>
<dbReference type="InterPro" id="IPR001017">
    <property type="entry name" value="DH_E1"/>
</dbReference>
<dbReference type="InterPro" id="IPR042179">
    <property type="entry name" value="KGD_C_sf"/>
</dbReference>
<dbReference type="InterPro" id="IPR031717">
    <property type="entry name" value="ODO-1/KGD_C"/>
</dbReference>
<dbReference type="InterPro" id="IPR029061">
    <property type="entry name" value="THDP-binding"/>
</dbReference>
<dbReference type="InterPro" id="IPR005475">
    <property type="entry name" value="Transketolase-like_Pyr-bd"/>
</dbReference>
<dbReference type="NCBIfam" id="TIGR00239">
    <property type="entry name" value="2oxo_dh_E1"/>
    <property type="match status" value="1"/>
</dbReference>
<dbReference type="NCBIfam" id="NF006914">
    <property type="entry name" value="PRK09404.1"/>
    <property type="match status" value="1"/>
</dbReference>
<dbReference type="NCBIfam" id="NF008907">
    <property type="entry name" value="PRK12270.1"/>
    <property type="match status" value="1"/>
</dbReference>
<dbReference type="PANTHER" id="PTHR23152:SF4">
    <property type="entry name" value="2-OXOADIPATE DEHYDROGENASE COMPLEX COMPONENT E1"/>
    <property type="match status" value="1"/>
</dbReference>
<dbReference type="PANTHER" id="PTHR23152">
    <property type="entry name" value="2-OXOGLUTARATE DEHYDROGENASE"/>
    <property type="match status" value="1"/>
</dbReference>
<dbReference type="Pfam" id="PF00198">
    <property type="entry name" value="2-oxoacid_dh"/>
    <property type="match status" value="1"/>
</dbReference>
<dbReference type="Pfam" id="PF16078">
    <property type="entry name" value="2-oxogl_dehyd_N"/>
    <property type="match status" value="1"/>
</dbReference>
<dbReference type="Pfam" id="PF00676">
    <property type="entry name" value="E1_dh"/>
    <property type="match status" value="1"/>
</dbReference>
<dbReference type="Pfam" id="PF16870">
    <property type="entry name" value="OxoGdeHyase_C"/>
    <property type="match status" value="1"/>
</dbReference>
<dbReference type="Pfam" id="PF02779">
    <property type="entry name" value="Transket_pyr"/>
    <property type="match status" value="1"/>
</dbReference>
<dbReference type="PIRSF" id="PIRSF000157">
    <property type="entry name" value="Oxoglu_dh_E1"/>
    <property type="match status" value="1"/>
</dbReference>
<dbReference type="SMART" id="SM00861">
    <property type="entry name" value="Transket_pyr"/>
    <property type="match status" value="1"/>
</dbReference>
<dbReference type="SUPFAM" id="SSF52777">
    <property type="entry name" value="CoA-dependent acyltransferases"/>
    <property type="match status" value="1"/>
</dbReference>
<dbReference type="SUPFAM" id="SSF52518">
    <property type="entry name" value="Thiamin diphosphate-binding fold (THDP-binding)"/>
    <property type="match status" value="2"/>
</dbReference>
<evidence type="ECO:0000250" key="1"/>
<evidence type="ECO:0000250" key="2">
    <source>
        <dbReference type="UniProtKB" id="A0R2B1"/>
    </source>
</evidence>
<evidence type="ECO:0000255" key="3"/>
<evidence type="ECO:0000256" key="4">
    <source>
        <dbReference type="SAM" id="MobiDB-lite"/>
    </source>
</evidence>
<evidence type="ECO:0000305" key="5"/>
<accession>Q7U0A6</accession>
<accession>A0A1R3XXT2</accession>
<accession>X2BH56</accession>
<sequence>MANISSPFGQNEWLVEAMYRKFRDDPSSVDPSWHEFLVDYSPEPTSQPAAEPTRVTSPLVAERAAAAAPQAPPKPADTAAAGNGVVAALAAKTAVPPPAEGDEVAVLRGAAAAVVKNMSASLEVPTATSVRAVPAKLLIDNRIVINNQLKRTRGGKISFTHLLGYALVQAVKKFPNMNRHYTEVDGKPTAVTPAHTNLGLAIDLQGKDGKRSLVVAGIKRCETMRFAQFVTAYEDIVRRARDGKLTTEDFAGVTISLTNPGTIGTVHSVPRLMPGQGAIIGVGAMEYPAEFQGASEERIAELGIGKLITLTSTYDHRIIQGAESGDFLRTIHELLLSDGFWDEVFRELSIPYLPVRWSTDNPDSIVDKNARVMNLIAAYRNRGHLMADTDPLRLDKARFRSHPDLEVLTHGLTLWDLDRVFKVDGFAGAQYKKLRDVLGLLRDAYCRHIGVEYAHILDPEQKEWLEQRVETKHVKPTVAQQKYILSKLNAAEAFETFLQTKYVGQKRFSLEGAESVIPMMDAAIDQCAEHGLDEVVIGMPHRGRLNVLANIVGKPYSQIFTEFEGNLNPSQAHGSGDVKYHLGATGLYLQMFGDNDIQVSLTANPSHLEAVDPVLEGLVRAKQDLLDHGSIDSDGQRAFSVVPLMLHGDAAFAGQGVVAETLNLANLPGYRVGGTIHIIVNNQIGFTTAPEYSRSSEYCTDVAKMIGAPIFHVNGDDPEACVWVARLAVDFRQRFKKDVVIDMLCYRRRGHNEGDDPSMTNPYMYDVVDTKRGARKSYTEALIGRGDISMKEAEDALRDYQGQLERVFNEVRELEKHGVQPSESVESDQMIPAGLATAVDKSLLARIGDAFLALPNGFTAHPRVQPVLEKRREMAYEGKIDWAFGELLALGSLVAEGKLVRLSGQDSRRGTFSQRHSVLIDRHTGEEFTPLQLLATNSDGSPTGGKFLVYDSPLSEYAAVGFEYGYTVGNPDAVVLWEAQFGDFVNGAQSIIDEFISSGEAKWGQLSNVVLLLPHGHEGQGPDHTSARIERFLQLWAEGSMTIAMPSTPSNYFHLLRRHALDGIQRPLIVFTPKSMLRHKAAVSEIKDFTEIKFRSVLEEPTYEDGIGDRNKVSRILLTSGKLYYELAARKAKDNRNDLAIVRLEQLAPLPRRRLRETLDRYENVKEFFWVQEEPANQGAWPRFGLELPELLPDKLAGIKRISRRAMSAPSSGSSKVHAVEQQEILDEAFG</sequence>
<protein>
    <recommendedName>
        <fullName>Multifunctional 2-oxoglutarate metabolism enzyme</fullName>
    </recommendedName>
    <alternativeName>
        <fullName>2-hydroxy-3-oxoadipate synthase</fullName>
        <shortName>HOA synthase</shortName>
        <shortName>HOAS</shortName>
        <ecNumber>2.2.1.5</ecNumber>
    </alternativeName>
    <alternativeName>
        <fullName>2-oxoglutarate carboxy-lyase</fullName>
    </alternativeName>
    <alternativeName>
        <fullName>2-oxoglutarate decarboxylase</fullName>
    </alternativeName>
    <alternativeName>
        <fullName>Alpha-ketoglutarate decarboxylase</fullName>
        <shortName>KG decarboxylase</shortName>
        <shortName>KGD</shortName>
        <ecNumber>4.1.1.71</ecNumber>
    </alternativeName>
    <alternativeName>
        <fullName>Alpha-ketoglutarate-glyoxylate carboligase</fullName>
    </alternativeName>
    <domain>
        <recommendedName>
            <fullName>2-oxoglutarate dehydrogenase E1 component</fullName>
            <shortName>ODH E1 component</shortName>
            <ecNumber>1.2.4.2</ecNumber>
        </recommendedName>
        <alternativeName>
            <fullName>Alpha-ketoglutarate dehydrogenase E1 component</fullName>
            <shortName>KDH E1 component</shortName>
        </alternativeName>
    </domain>
    <domain>
        <recommendedName>
            <fullName>Dihydrolipoyllysine-residue succinyltransferase component of 2-oxoglutarate dehydrogenase complex</fullName>
            <ecNumber>2.3.1.61</ecNumber>
        </recommendedName>
        <alternativeName>
            <fullName>2-oxoglutarate dehydrogenase complex E2 component</fullName>
            <shortName>ODH E2 component</shortName>
            <shortName>OGDC-E2</shortName>
        </alternativeName>
        <alternativeName>
            <fullName>Dihydrolipoamide succinyltransferase</fullName>
        </alternativeName>
    </domain>
</protein>
<name>KGD_MYCBO</name>
<keyword id="KW-0012">Acyltransferase</keyword>
<keyword id="KW-0021">Allosteric enzyme</keyword>
<keyword id="KW-0175">Coiled coil</keyword>
<keyword id="KW-0210">Decarboxylase</keyword>
<keyword id="KW-0456">Lyase</keyword>
<keyword id="KW-0460">Magnesium</keyword>
<keyword id="KW-0479">Metal-binding</keyword>
<keyword id="KW-0511">Multifunctional enzyme</keyword>
<keyword id="KW-0560">Oxidoreductase</keyword>
<keyword id="KW-1185">Reference proteome</keyword>
<keyword id="KW-0786">Thiamine pyrophosphate</keyword>
<keyword id="KW-0808">Transferase</keyword>
<keyword id="KW-0816">Tricarboxylic acid cycle</keyword>
<feature type="chain" id="PRO_0000310714" description="Multifunctional 2-oxoglutarate metabolism enzyme">
    <location>
        <begin position="1"/>
        <end position="1231"/>
    </location>
</feature>
<feature type="region of interest" description="2-oxoglutarate dehydrogenase E1, N-terminal part">
    <location>
        <begin position="1"/>
        <end position="41"/>
    </location>
</feature>
<feature type="region of interest" description="Disordered" evidence="4">
    <location>
        <begin position="24"/>
        <end position="56"/>
    </location>
</feature>
<feature type="region of interest" description="Linker">
    <location>
        <begin position="42"/>
        <end position="88"/>
    </location>
</feature>
<feature type="region of interest" description="Succinyltransferase E2">
    <location>
        <begin position="89"/>
        <end position="337"/>
    </location>
</feature>
<feature type="region of interest" description="2-oxoglutarate dehydrogenase E1, C-terminal part">
    <location>
        <begin position="338"/>
        <end position="1231"/>
    </location>
</feature>
<feature type="coiled-coil region" evidence="3">
    <location>
        <begin position="787"/>
        <end position="817"/>
    </location>
</feature>
<feature type="compositionally biased region" description="Basic and acidic residues" evidence="4">
    <location>
        <begin position="24"/>
        <end position="37"/>
    </location>
</feature>
<feature type="active site" description="Proton acceptor; for succinyltransferase activity" evidence="1">
    <location>
        <position position="316"/>
    </location>
</feature>
<feature type="binding site" evidence="2">
    <location>
        <position position="542"/>
    </location>
    <ligand>
        <name>thiamine diphosphate</name>
        <dbReference type="ChEBI" id="CHEBI:58937"/>
    </ligand>
</feature>
<feature type="binding site" evidence="2">
    <location>
        <position position="581"/>
    </location>
    <ligand>
        <name>2-oxoglutarate</name>
        <dbReference type="ChEBI" id="CHEBI:16810"/>
    </ligand>
</feature>
<feature type="binding site" evidence="2">
    <location>
        <position position="606"/>
    </location>
    <ligand>
        <name>2-oxoglutarate</name>
        <dbReference type="ChEBI" id="CHEBI:16810"/>
    </ligand>
</feature>
<feature type="binding site" evidence="2">
    <location>
        <position position="606"/>
    </location>
    <ligand>
        <name>thiamine diphosphate</name>
        <dbReference type="ChEBI" id="CHEBI:58937"/>
    </ligand>
</feature>
<feature type="binding site" evidence="2">
    <location>
        <position position="608"/>
    </location>
    <ligand>
        <name>thiamine diphosphate</name>
        <dbReference type="ChEBI" id="CHEBI:58937"/>
    </ligand>
</feature>
<feature type="binding site" evidence="2">
    <location>
        <position position="649"/>
    </location>
    <ligand>
        <name>Mg(2+)</name>
        <dbReference type="ChEBI" id="CHEBI:18420"/>
    </ligand>
</feature>
<feature type="binding site" evidence="2">
    <location>
        <position position="649"/>
    </location>
    <ligand>
        <name>thiamine diphosphate</name>
        <dbReference type="ChEBI" id="CHEBI:58937"/>
    </ligand>
</feature>
<feature type="binding site" evidence="2">
    <location>
        <position position="650"/>
    </location>
    <ligand>
        <name>thiamine diphosphate</name>
        <dbReference type="ChEBI" id="CHEBI:58937"/>
    </ligand>
</feature>
<feature type="binding site" evidence="2">
    <location>
        <position position="651"/>
    </location>
    <ligand>
        <name>thiamine diphosphate</name>
        <dbReference type="ChEBI" id="CHEBI:58937"/>
    </ligand>
</feature>
<feature type="binding site" evidence="2">
    <location>
        <position position="682"/>
    </location>
    <ligand>
        <name>Mg(2+)</name>
        <dbReference type="ChEBI" id="CHEBI:18420"/>
    </ligand>
</feature>
<feature type="binding site" evidence="2">
    <location>
        <position position="682"/>
    </location>
    <ligand>
        <name>thiamine diphosphate</name>
        <dbReference type="ChEBI" id="CHEBI:58937"/>
    </ligand>
</feature>
<feature type="binding site" evidence="2">
    <location>
        <position position="684"/>
    </location>
    <ligand>
        <name>Mg(2+)</name>
        <dbReference type="ChEBI" id="CHEBI:18420"/>
    </ligand>
</feature>
<feature type="binding site" evidence="2">
    <location>
        <position position="1024"/>
    </location>
    <ligand>
        <name>2-oxoglutarate</name>
        <dbReference type="ChEBI" id="CHEBI:16810"/>
    </ligand>
</feature>
<feature type="binding site" evidence="2">
    <location>
        <position position="1042"/>
    </location>
    <ligand>
        <name>acetyl-CoA</name>
        <dbReference type="ChEBI" id="CHEBI:57288"/>
        <note>allosteric activator</note>
    </ligand>
</feature>
<feature type="binding site" evidence="2">
    <location>
        <position position="1058"/>
    </location>
    <ligand>
        <name>acetyl-CoA</name>
        <dbReference type="ChEBI" id="CHEBI:57288"/>
        <note>allosteric activator</note>
    </ligand>
</feature>
<feature type="binding site" evidence="2">
    <location>
        <position position="1093"/>
    </location>
    <ligand>
        <name>acetyl-CoA</name>
        <dbReference type="ChEBI" id="CHEBI:57288"/>
        <note>allosteric activator</note>
    </ligand>
</feature>
<feature type="binding site" evidence="2">
    <location>
        <position position="1096"/>
    </location>
    <ligand>
        <name>acetyl-CoA</name>
        <dbReference type="ChEBI" id="CHEBI:57288"/>
        <note>allosteric activator</note>
    </ligand>
</feature>
<feature type="binding site" evidence="2">
    <location>
        <position position="1146"/>
    </location>
    <ligand>
        <name>acetyl-CoA</name>
        <dbReference type="ChEBI" id="CHEBI:57288"/>
        <note>allosteric activator</note>
    </ligand>
</feature>
<feature type="binding site" evidence="2">
    <location>
        <position position="1153"/>
    </location>
    <ligand>
        <name>acetyl-CoA</name>
        <dbReference type="ChEBI" id="CHEBI:57288"/>
        <note>allosteric activator</note>
    </ligand>
</feature>
<feature type="binding site" evidence="2">
    <location>
        <position position="1154"/>
    </location>
    <ligand>
        <name>acetyl-CoA</name>
        <dbReference type="ChEBI" id="CHEBI:57288"/>
        <note>allosteric activator</note>
    </ligand>
</feature>
<organism>
    <name type="scientific">Mycobacterium bovis (strain ATCC BAA-935 / AF2122/97)</name>
    <dbReference type="NCBI Taxonomy" id="233413"/>
    <lineage>
        <taxon>Bacteria</taxon>
        <taxon>Bacillati</taxon>
        <taxon>Actinomycetota</taxon>
        <taxon>Actinomycetes</taxon>
        <taxon>Mycobacteriales</taxon>
        <taxon>Mycobacteriaceae</taxon>
        <taxon>Mycobacterium</taxon>
        <taxon>Mycobacterium tuberculosis complex</taxon>
    </lineage>
</organism>
<proteinExistence type="inferred from homology"/>
<comment type="function">
    <text evidence="1">Shows three enzymatic activities that share a first common step, the attack of thiamine-PP on 2-oxoglutarate (alpha-ketoglutarate, KG), leading to the formation of an enamine-thiamine-PP intermediate upon decarboxylation. Thus, displays KGD activity, catalyzing the decarboxylation from five-carbon 2-oxoglutarate to four-carbon succinate semialdehyde (SSA). Also catalyzes C-C bond formation between the activated aldehyde formed after decarboxylation of alpha-ketoglutarate and the carbonyl of glyoxylate (GLX), to yield 2-hydroxy-3-oxoadipate (HOA), which spontaneously decarboxylates to form 5-hydroxylevulinate (HLA). And is also a component of the 2-oxoglutarate dehydrogenase (ODH) complex, that catalyzes the overall conversion of 2-oxoglutarate to succinyl-CoA and CO(2). The KG decarboxylase and KG dehydrogenase reactions provide two alternative, tightly regulated, pathways connecting the oxidative and reductive branches of the TCA cycle (By similarity).</text>
</comment>
<comment type="catalytic activity">
    <reaction>
        <text>glyoxylate + 2-oxoglutarate + H(+) = 2-hydroxy-3-oxoadipate + CO2</text>
        <dbReference type="Rhea" id="RHEA:14341"/>
        <dbReference type="ChEBI" id="CHEBI:15378"/>
        <dbReference type="ChEBI" id="CHEBI:16526"/>
        <dbReference type="ChEBI" id="CHEBI:16810"/>
        <dbReference type="ChEBI" id="CHEBI:36655"/>
        <dbReference type="ChEBI" id="CHEBI:57712"/>
        <dbReference type="EC" id="2.2.1.5"/>
    </reaction>
</comment>
<comment type="catalytic activity">
    <reaction>
        <text>2-oxoglutarate + H(+) = succinate semialdehyde + CO2</text>
        <dbReference type="Rhea" id="RHEA:10524"/>
        <dbReference type="ChEBI" id="CHEBI:15378"/>
        <dbReference type="ChEBI" id="CHEBI:16526"/>
        <dbReference type="ChEBI" id="CHEBI:16810"/>
        <dbReference type="ChEBI" id="CHEBI:57706"/>
        <dbReference type="EC" id="4.1.1.71"/>
    </reaction>
</comment>
<comment type="catalytic activity">
    <reaction>
        <text>N(6)-[(R)-lipoyl]-L-lysyl-[protein] + 2-oxoglutarate + H(+) = N(6)-[(R)-S(8)-succinyldihydrolipoyl]-L-lysyl-[protein] + CO2</text>
        <dbReference type="Rhea" id="RHEA:12188"/>
        <dbReference type="Rhea" id="RHEA-COMP:10474"/>
        <dbReference type="Rhea" id="RHEA-COMP:20092"/>
        <dbReference type="ChEBI" id="CHEBI:15378"/>
        <dbReference type="ChEBI" id="CHEBI:16526"/>
        <dbReference type="ChEBI" id="CHEBI:16810"/>
        <dbReference type="ChEBI" id="CHEBI:83099"/>
        <dbReference type="ChEBI" id="CHEBI:83120"/>
        <dbReference type="EC" id="1.2.4.2"/>
    </reaction>
</comment>
<comment type="catalytic activity">
    <reaction>
        <text>N(6)-[(R)-dihydrolipoyl]-L-lysyl-[protein] + succinyl-CoA = N(6)-[(R)-S(8)-succinyldihydrolipoyl]-L-lysyl-[protein] + CoA</text>
        <dbReference type="Rhea" id="RHEA:15213"/>
        <dbReference type="Rhea" id="RHEA-COMP:10475"/>
        <dbReference type="Rhea" id="RHEA-COMP:20092"/>
        <dbReference type="ChEBI" id="CHEBI:57287"/>
        <dbReference type="ChEBI" id="CHEBI:57292"/>
        <dbReference type="ChEBI" id="CHEBI:83100"/>
        <dbReference type="ChEBI" id="CHEBI:83120"/>
        <dbReference type="EC" id="2.3.1.61"/>
    </reaction>
</comment>
<comment type="cofactor">
    <cofactor evidence="1">
        <name>Mg(2+)</name>
        <dbReference type="ChEBI" id="CHEBI:18420"/>
    </cofactor>
</comment>
<comment type="cofactor">
    <cofactor evidence="1">
        <name>thiamine diphosphate</name>
        <dbReference type="ChEBI" id="CHEBI:58937"/>
    </cofactor>
</comment>
<comment type="activity regulation">
    <text evidence="1">Alpha-ketoglutarate dehydrogenase and decarboxylase activities are inhibited by unphosphorylated GarA, and allosterically activated by acetyl-CoA, the main substrate of the TCA cycle.</text>
</comment>
<comment type="pathway">
    <text>Carbohydrate metabolism; tricarboxylic acid cycle; succinate from 2-oxoglutarate (transferase route): step 1/2.</text>
</comment>
<comment type="pathway">
    <text>Carbohydrate metabolism; tricarboxylic acid cycle; succinyl-CoA from 2-oxoglutarate (dehydrogenase route): step 1/1.</text>
</comment>
<comment type="subunit">
    <text evidence="1">Homodimer. The 2-oxoglutarate dehydrogenase (ODH) complex contains multiple copies of three enzymatic components: 2-oxoglutarate dehydrogenase (E1), dihydrolipoamide succinyltransferase (E2) and lipoamide dehydrogenase (E3) (By similarity).</text>
</comment>
<comment type="domain">
    <text evidence="1">Is a fusion protein with two major domains exhibiting structural features of an E1 and E2 protein, and a short sequence stretch of E1 localized at the N-terminus, which is connected by a linker region to the rest of the protein.</text>
</comment>
<comment type="similarity">
    <text evidence="5">Belongs to the 2-oxoacid dehydrogenase family. Kgd subfamily.</text>
</comment>